<dbReference type="EMBL" id="CP001056">
    <property type="protein sequence ID" value="ACD24658.1"/>
    <property type="molecule type" value="Genomic_DNA"/>
</dbReference>
<dbReference type="SMR" id="B2TQR9"/>
<dbReference type="KEGG" id="cbk:CLL_A3340"/>
<dbReference type="PATRIC" id="fig|935198.13.peg.3306"/>
<dbReference type="HOGENOM" id="CLU_053282_0_0_9"/>
<dbReference type="Proteomes" id="UP000001195">
    <property type="component" value="Chromosome"/>
</dbReference>
<dbReference type="GO" id="GO:0003677">
    <property type="term" value="F:DNA binding"/>
    <property type="evidence" value="ECO:0007669"/>
    <property type="project" value="UniProtKB-UniRule"/>
</dbReference>
<dbReference type="GO" id="GO:0004519">
    <property type="term" value="F:endonuclease activity"/>
    <property type="evidence" value="ECO:0007669"/>
    <property type="project" value="InterPro"/>
</dbReference>
<dbReference type="GO" id="GO:0051301">
    <property type="term" value="P:cell division"/>
    <property type="evidence" value="ECO:0007669"/>
    <property type="project" value="UniProtKB-UniRule"/>
</dbReference>
<dbReference type="GO" id="GO:0043937">
    <property type="term" value="P:regulation of sporulation"/>
    <property type="evidence" value="ECO:0007669"/>
    <property type="project" value="InterPro"/>
</dbReference>
<dbReference type="Gene3D" id="3.10.28.10">
    <property type="entry name" value="Homing endonucleases"/>
    <property type="match status" value="1"/>
</dbReference>
<dbReference type="HAMAP" id="MF_01420">
    <property type="entry name" value="HTH_type_WhiA"/>
    <property type="match status" value="1"/>
</dbReference>
<dbReference type="InterPro" id="IPR027434">
    <property type="entry name" value="Homing_endonucl"/>
</dbReference>
<dbReference type="InterPro" id="IPR004042">
    <property type="entry name" value="Intein_endonuc_central"/>
</dbReference>
<dbReference type="InterPro" id="IPR018478">
    <property type="entry name" value="Sporu_reg_WhiA_N_dom"/>
</dbReference>
<dbReference type="InterPro" id="IPR003802">
    <property type="entry name" value="Sporulation_regulator_WhiA"/>
</dbReference>
<dbReference type="InterPro" id="IPR023054">
    <property type="entry name" value="Sporulation_regulator_WhiA_C"/>
</dbReference>
<dbReference type="InterPro" id="IPR039518">
    <property type="entry name" value="WhiA_LAGLIDADG_dom"/>
</dbReference>
<dbReference type="NCBIfam" id="TIGR00647">
    <property type="entry name" value="DNA_bind_WhiA"/>
    <property type="match status" value="1"/>
</dbReference>
<dbReference type="PANTHER" id="PTHR37307">
    <property type="entry name" value="CELL DIVISION PROTEIN WHIA-RELATED"/>
    <property type="match status" value="1"/>
</dbReference>
<dbReference type="PANTHER" id="PTHR37307:SF1">
    <property type="entry name" value="CELL DIVISION PROTEIN WHIA-RELATED"/>
    <property type="match status" value="1"/>
</dbReference>
<dbReference type="Pfam" id="PF02650">
    <property type="entry name" value="HTH_WhiA"/>
    <property type="match status" value="1"/>
</dbReference>
<dbReference type="Pfam" id="PF14527">
    <property type="entry name" value="LAGLIDADG_WhiA"/>
    <property type="match status" value="1"/>
</dbReference>
<dbReference type="Pfam" id="PF10298">
    <property type="entry name" value="WhiA_N"/>
    <property type="match status" value="1"/>
</dbReference>
<dbReference type="SUPFAM" id="SSF55608">
    <property type="entry name" value="Homing endonucleases"/>
    <property type="match status" value="1"/>
</dbReference>
<dbReference type="PROSITE" id="PS50819">
    <property type="entry name" value="INTEIN_ENDONUCLEASE"/>
    <property type="match status" value="1"/>
</dbReference>
<name>WHIA_CLOBB</name>
<sequence length="315" mass="35731">MSFSSKVKGEICRYVDMCKEDALAEISAIMKVSGTIAFSGSGLSFKMTTENPASARLIFTLLKEHFNIHSKLMVKKSNSLKKNNIYMVVISEDMGVRELLYETGILQDIDGIMNLNYRINKSMIETEENRRAYIRGAFIGGGSISNPERTYHLEFVTHSEEYAIDLKDIINTFGLNSKVIQRKSSHIIYIKEGEQIVDLLNIIGAHASLLELENIRIMKEMRNNVNRLVNCETANLSKTVNAAVRQVESIRLIQNKIGLQRLPQNLREVAELRLNYPDESLKELGQMLDPQVGKSGINHRLRKIEKIAEELRTGN</sequence>
<comment type="function">
    <text evidence="1">Involved in cell division and chromosome segregation.</text>
</comment>
<comment type="similarity">
    <text evidence="1">Belongs to the WhiA family.</text>
</comment>
<keyword id="KW-0131">Cell cycle</keyword>
<keyword id="KW-0132">Cell division</keyword>
<keyword id="KW-0238">DNA-binding</keyword>
<proteinExistence type="inferred from homology"/>
<protein>
    <recommendedName>
        <fullName evidence="1">Probable cell division protein WhiA</fullName>
    </recommendedName>
</protein>
<organism>
    <name type="scientific">Clostridium botulinum (strain Eklund 17B / Type B)</name>
    <dbReference type="NCBI Taxonomy" id="935198"/>
    <lineage>
        <taxon>Bacteria</taxon>
        <taxon>Bacillati</taxon>
        <taxon>Bacillota</taxon>
        <taxon>Clostridia</taxon>
        <taxon>Eubacteriales</taxon>
        <taxon>Clostridiaceae</taxon>
        <taxon>Clostridium</taxon>
    </lineage>
</organism>
<feature type="chain" id="PRO_0000376459" description="Probable cell division protein WhiA">
    <location>
        <begin position="1"/>
        <end position="315"/>
    </location>
</feature>
<feature type="DNA-binding region" description="H-T-H motif" evidence="1">
    <location>
        <begin position="280"/>
        <end position="313"/>
    </location>
</feature>
<gene>
    <name evidence="1" type="primary">whiA</name>
    <name type="ordered locus">CLL_A3340</name>
</gene>
<evidence type="ECO:0000255" key="1">
    <source>
        <dbReference type="HAMAP-Rule" id="MF_01420"/>
    </source>
</evidence>
<reference key="1">
    <citation type="submission" date="2008-04" db="EMBL/GenBank/DDBJ databases">
        <title>Complete sequence of Clostridium botulinum strain Eklund.</title>
        <authorList>
            <person name="Brinkac L.M."/>
            <person name="Brown J.L."/>
            <person name="Bruce D."/>
            <person name="Detter C."/>
            <person name="Munk C."/>
            <person name="Smith L.A."/>
            <person name="Smith T.J."/>
            <person name="Sutton G."/>
            <person name="Brettin T.S."/>
        </authorList>
    </citation>
    <scope>NUCLEOTIDE SEQUENCE [LARGE SCALE GENOMIC DNA]</scope>
    <source>
        <strain>Eklund 17B / Type B</strain>
    </source>
</reference>
<accession>B2TQR9</accession>